<comment type="function">
    <text evidence="1">Catalyzes the thiamine diphosphate-dependent decarboxylation of 2-oxoglutarate and the subsequent addition of the resulting succinic semialdehyde-thiamine pyrophosphate anion to isochorismate to yield 2-succinyl-5-enolpyruvyl-6-hydroxy-3-cyclohexene-1-carboxylate (SEPHCHC).</text>
</comment>
<comment type="catalytic activity">
    <reaction evidence="1">
        <text>isochorismate + 2-oxoglutarate + H(+) = 5-enolpyruvoyl-6-hydroxy-2-succinyl-cyclohex-3-ene-1-carboxylate + CO2</text>
        <dbReference type="Rhea" id="RHEA:25593"/>
        <dbReference type="ChEBI" id="CHEBI:15378"/>
        <dbReference type="ChEBI" id="CHEBI:16526"/>
        <dbReference type="ChEBI" id="CHEBI:16810"/>
        <dbReference type="ChEBI" id="CHEBI:29780"/>
        <dbReference type="ChEBI" id="CHEBI:58818"/>
        <dbReference type="EC" id="2.2.1.9"/>
    </reaction>
</comment>
<comment type="cofactor">
    <cofactor evidence="1">
        <name>Mg(2+)</name>
        <dbReference type="ChEBI" id="CHEBI:18420"/>
    </cofactor>
    <cofactor evidence="1">
        <name>Mn(2+)</name>
        <dbReference type="ChEBI" id="CHEBI:29035"/>
    </cofactor>
</comment>
<comment type="cofactor">
    <cofactor evidence="1">
        <name>thiamine diphosphate</name>
        <dbReference type="ChEBI" id="CHEBI:58937"/>
    </cofactor>
    <text evidence="1">Binds 1 thiamine pyrophosphate per subunit.</text>
</comment>
<comment type="pathway">
    <text evidence="1">Quinol/quinone metabolism; 1,4-dihydroxy-2-naphthoate biosynthesis; 1,4-dihydroxy-2-naphthoate from chorismate: step 2/7.</text>
</comment>
<comment type="pathway">
    <text evidence="1">Quinol/quinone metabolism; menaquinone biosynthesis.</text>
</comment>
<comment type="subunit">
    <text evidence="1">Homodimer.</text>
</comment>
<comment type="similarity">
    <text evidence="1">Belongs to the TPP enzyme family. MenD subfamily.</text>
</comment>
<organism>
    <name type="scientific">Serratia proteamaculans (strain 568)</name>
    <dbReference type="NCBI Taxonomy" id="399741"/>
    <lineage>
        <taxon>Bacteria</taxon>
        <taxon>Pseudomonadati</taxon>
        <taxon>Pseudomonadota</taxon>
        <taxon>Gammaproteobacteria</taxon>
        <taxon>Enterobacterales</taxon>
        <taxon>Yersiniaceae</taxon>
        <taxon>Serratia</taxon>
    </lineage>
</organism>
<feature type="chain" id="PRO_0000341826" description="2-succinyl-5-enolpyruvyl-6-hydroxy-3-cyclohexene-1-carboxylate synthase">
    <location>
        <begin position="1"/>
        <end position="557"/>
    </location>
</feature>
<gene>
    <name evidence="1" type="primary">menD</name>
    <name type="ordered locus">Spro_3283</name>
</gene>
<reference key="1">
    <citation type="submission" date="2007-09" db="EMBL/GenBank/DDBJ databases">
        <title>Complete sequence of chromosome of Serratia proteamaculans 568.</title>
        <authorList>
            <consortium name="US DOE Joint Genome Institute"/>
            <person name="Copeland A."/>
            <person name="Lucas S."/>
            <person name="Lapidus A."/>
            <person name="Barry K."/>
            <person name="Glavina del Rio T."/>
            <person name="Dalin E."/>
            <person name="Tice H."/>
            <person name="Pitluck S."/>
            <person name="Chain P."/>
            <person name="Malfatti S."/>
            <person name="Shin M."/>
            <person name="Vergez L."/>
            <person name="Schmutz J."/>
            <person name="Larimer F."/>
            <person name="Land M."/>
            <person name="Hauser L."/>
            <person name="Kyrpides N."/>
            <person name="Kim E."/>
            <person name="Taghavi S."/>
            <person name="Newman L."/>
            <person name="Vangronsveld J."/>
            <person name="van der Lelie D."/>
            <person name="Richardson P."/>
        </authorList>
    </citation>
    <scope>NUCLEOTIDE SEQUENCE [LARGE SCALE GENOMIC DNA]</scope>
    <source>
        <strain>568</strain>
    </source>
</reference>
<keyword id="KW-0460">Magnesium</keyword>
<keyword id="KW-0464">Manganese</keyword>
<keyword id="KW-0474">Menaquinone biosynthesis</keyword>
<keyword id="KW-0479">Metal-binding</keyword>
<keyword id="KW-0786">Thiamine pyrophosphate</keyword>
<keyword id="KW-0808">Transferase</keyword>
<dbReference type="EC" id="2.2.1.9" evidence="1"/>
<dbReference type="EMBL" id="CP000826">
    <property type="protein sequence ID" value="ABV42381.1"/>
    <property type="molecule type" value="Genomic_DNA"/>
</dbReference>
<dbReference type="SMR" id="A8GGZ1"/>
<dbReference type="STRING" id="399741.Spro_3283"/>
<dbReference type="KEGG" id="spe:Spro_3283"/>
<dbReference type="eggNOG" id="COG1165">
    <property type="taxonomic scope" value="Bacteria"/>
</dbReference>
<dbReference type="HOGENOM" id="CLU_006051_3_0_6"/>
<dbReference type="OrthoDB" id="9791859at2"/>
<dbReference type="UniPathway" id="UPA00079"/>
<dbReference type="UniPathway" id="UPA01057">
    <property type="reaction ID" value="UER00164"/>
</dbReference>
<dbReference type="GO" id="GO:0070204">
    <property type="term" value="F:2-succinyl-5-enolpyruvyl-6-hydroxy-3-cyclohexene-1-carboxylic-acid synthase activity"/>
    <property type="evidence" value="ECO:0007669"/>
    <property type="project" value="UniProtKB-UniRule"/>
</dbReference>
<dbReference type="GO" id="GO:0000287">
    <property type="term" value="F:magnesium ion binding"/>
    <property type="evidence" value="ECO:0007669"/>
    <property type="project" value="UniProtKB-UniRule"/>
</dbReference>
<dbReference type="GO" id="GO:0030145">
    <property type="term" value="F:manganese ion binding"/>
    <property type="evidence" value="ECO:0007669"/>
    <property type="project" value="UniProtKB-UniRule"/>
</dbReference>
<dbReference type="GO" id="GO:0030976">
    <property type="term" value="F:thiamine pyrophosphate binding"/>
    <property type="evidence" value="ECO:0007669"/>
    <property type="project" value="UniProtKB-UniRule"/>
</dbReference>
<dbReference type="GO" id="GO:0009234">
    <property type="term" value="P:menaquinone biosynthetic process"/>
    <property type="evidence" value="ECO:0007669"/>
    <property type="project" value="UniProtKB-UniRule"/>
</dbReference>
<dbReference type="CDD" id="cd07037">
    <property type="entry name" value="TPP_PYR_MenD"/>
    <property type="match status" value="1"/>
</dbReference>
<dbReference type="CDD" id="cd02009">
    <property type="entry name" value="TPP_SHCHC_synthase"/>
    <property type="match status" value="1"/>
</dbReference>
<dbReference type="FunFam" id="3.40.50.970:FF:000029">
    <property type="entry name" value="2-succinyl-5-enolpyruvyl-6-hydroxy-3-cyclohexene-1-carboxylate synthase"/>
    <property type="match status" value="1"/>
</dbReference>
<dbReference type="Gene3D" id="3.40.50.970">
    <property type="match status" value="2"/>
</dbReference>
<dbReference type="Gene3D" id="3.40.50.1220">
    <property type="entry name" value="TPP-binding domain"/>
    <property type="match status" value="1"/>
</dbReference>
<dbReference type="HAMAP" id="MF_01659">
    <property type="entry name" value="MenD"/>
    <property type="match status" value="1"/>
</dbReference>
<dbReference type="InterPro" id="IPR029035">
    <property type="entry name" value="DHS-like_NAD/FAD-binding_dom"/>
</dbReference>
<dbReference type="InterPro" id="IPR004433">
    <property type="entry name" value="MenaQ_synth_MenD"/>
</dbReference>
<dbReference type="InterPro" id="IPR032264">
    <property type="entry name" value="MenD_middle"/>
</dbReference>
<dbReference type="InterPro" id="IPR029061">
    <property type="entry name" value="THDP-binding"/>
</dbReference>
<dbReference type="InterPro" id="IPR012001">
    <property type="entry name" value="Thiamin_PyroP_enz_TPP-bd_dom"/>
</dbReference>
<dbReference type="InterPro" id="IPR011766">
    <property type="entry name" value="TPP_enzyme_TPP-bd"/>
</dbReference>
<dbReference type="NCBIfam" id="TIGR00173">
    <property type="entry name" value="menD"/>
    <property type="match status" value="1"/>
</dbReference>
<dbReference type="PANTHER" id="PTHR42916">
    <property type="entry name" value="2-SUCCINYL-5-ENOLPYRUVYL-6-HYDROXY-3-CYCLOHEXENE-1-CARBOXYLATE SYNTHASE"/>
    <property type="match status" value="1"/>
</dbReference>
<dbReference type="PANTHER" id="PTHR42916:SF1">
    <property type="entry name" value="PROTEIN PHYLLO, CHLOROPLASTIC"/>
    <property type="match status" value="1"/>
</dbReference>
<dbReference type="Pfam" id="PF02775">
    <property type="entry name" value="TPP_enzyme_C"/>
    <property type="match status" value="1"/>
</dbReference>
<dbReference type="Pfam" id="PF16582">
    <property type="entry name" value="TPP_enzyme_M_2"/>
    <property type="match status" value="1"/>
</dbReference>
<dbReference type="Pfam" id="PF02776">
    <property type="entry name" value="TPP_enzyme_N"/>
    <property type="match status" value="1"/>
</dbReference>
<dbReference type="PIRSF" id="PIRSF004983">
    <property type="entry name" value="MenD"/>
    <property type="match status" value="1"/>
</dbReference>
<dbReference type="SUPFAM" id="SSF52467">
    <property type="entry name" value="DHS-like NAD/FAD-binding domain"/>
    <property type="match status" value="1"/>
</dbReference>
<dbReference type="SUPFAM" id="SSF52518">
    <property type="entry name" value="Thiamin diphosphate-binding fold (THDP-binding)"/>
    <property type="match status" value="2"/>
</dbReference>
<name>MEND_SERP5</name>
<accession>A8GGZ1</accession>
<proteinExistence type="inferred from homology"/>
<protein>
    <recommendedName>
        <fullName evidence="1">2-succinyl-5-enolpyruvyl-6-hydroxy-3-cyclohexene-1-carboxylate synthase</fullName>
        <shortName evidence="1">SEPHCHC synthase</shortName>
        <ecNumber evidence="1">2.2.1.9</ecNumber>
    </recommendedName>
    <alternativeName>
        <fullName evidence="1">Menaquinone biosynthesis protein MenD</fullName>
    </alternativeName>
</protein>
<evidence type="ECO:0000255" key="1">
    <source>
        <dbReference type="HAMAP-Rule" id="MF_01659"/>
    </source>
</evidence>
<sequence length="557" mass="61273">MSTSVFNRRWAALLLEALARHGVRHVCIAPGSRSTPLTLAAAANKSFICHTHFDERGLGHLALGLAKASREPVAVIVTSGTAAANLYPSLIEAGLTGERLVFLTADRPPELINCGANQAIRQNGLYASHPALSIDLPRPTTDIPARWLVSTVDSAMARLQHGALHINCPFAEPLYGGDEQQYADWSATLGDWWQGNHPWLREVDPHQVLKQPDWFFWRQKRGVIVAGRMSADEGEHLAQWAEMLGWPLIGDVLSQTGQPLPCADLWLAQPQAQKRLAEAQLVVQFGSSLTGKRLLQWQEQCQPQEYWLIDDLPGRLDPAHHRGRRIRSSVAQWLELHPAQPRTPWADELTMLADNALDAVSGHLVNRFGEAQLAHRLPELLPENGQLFLGNSLIVRLIDALTRLPAGYPVFSNRGASGIDGLISTAAGVQRATAKPTLAVVGDLSALYDLNALALLRQCSAPTVLIVVNNNGGQIFSLLPTPEEDRQRFYCMPQNVEFSHAAAMFQLAYARPENWGQLLQAVEQGWRHGGATLIELQVPPSDGAQTLQHLVQQMTEQ</sequence>